<protein>
    <recommendedName>
        <fullName>Exocyst complex component 7</fullName>
    </recommendedName>
    <alternativeName>
        <fullName>Exocyst complex component Exo70</fullName>
    </alternativeName>
</protein>
<dbReference type="EMBL" id="FJ457119">
    <property type="protein sequence ID" value="ACK36853.1"/>
    <property type="molecule type" value="mRNA"/>
</dbReference>
<dbReference type="EMBL" id="FJ457120">
    <property type="protein sequence ID" value="ACK36854.1"/>
    <property type="molecule type" value="mRNA"/>
</dbReference>
<dbReference type="EMBL" id="AB028990">
    <property type="protein sequence ID" value="BAA83019.1"/>
    <property type="status" value="ALT_INIT"/>
    <property type="molecule type" value="mRNA"/>
</dbReference>
<dbReference type="EMBL" id="AK022397">
    <property type="protein sequence ID" value="BAB14026.1"/>
    <property type="molecule type" value="mRNA"/>
</dbReference>
<dbReference type="EMBL" id="AK022552">
    <property type="protein sequence ID" value="BAB14095.1"/>
    <property type="status" value="ALT_INIT"/>
    <property type="molecule type" value="mRNA"/>
</dbReference>
<dbReference type="EMBL" id="AK023832">
    <property type="protein sequence ID" value="BAB14694.1"/>
    <property type="molecule type" value="mRNA"/>
</dbReference>
<dbReference type="EMBL" id="AL834324">
    <property type="protein sequence ID" value="CAD38992.2"/>
    <property type="molecule type" value="mRNA"/>
</dbReference>
<dbReference type="EMBL" id="AC018665">
    <property type="status" value="NOT_ANNOTATED_CDS"/>
    <property type="molecule type" value="Genomic_DNA"/>
</dbReference>
<dbReference type="EMBL" id="BC011045">
    <property type="protein sequence ID" value="AAH11045.1"/>
    <property type="molecule type" value="mRNA"/>
</dbReference>
<dbReference type="EMBL" id="BC018466">
    <property type="protein sequence ID" value="AAH18466.1"/>
    <property type="molecule type" value="mRNA"/>
</dbReference>
<dbReference type="CCDS" id="CCDS11741.1">
    <molecule id="Q9UPT5-2"/>
</dbReference>
<dbReference type="CCDS" id="CCDS32738.1">
    <molecule id="Q9UPT5-1"/>
</dbReference>
<dbReference type="CCDS" id="CCDS45781.1">
    <molecule id="Q9UPT5-5"/>
</dbReference>
<dbReference type="CCDS" id="CCDS45782.1">
    <molecule id="Q9UPT5-3"/>
</dbReference>
<dbReference type="CCDS" id="CCDS45783.1">
    <molecule id="Q9UPT5-6"/>
</dbReference>
<dbReference type="RefSeq" id="NP_001013861.1">
    <molecule id="Q9UPT5-1"/>
    <property type="nucleotide sequence ID" value="NM_001013839.4"/>
</dbReference>
<dbReference type="RefSeq" id="NP_001138769.1">
    <molecule id="Q9UPT5-3"/>
    <property type="nucleotide sequence ID" value="NM_001145297.4"/>
</dbReference>
<dbReference type="RefSeq" id="NP_001138770.1">
    <molecule id="Q9UPT5-5"/>
    <property type="nucleotide sequence ID" value="NM_001145298.4"/>
</dbReference>
<dbReference type="RefSeq" id="NP_001138771.1">
    <molecule id="Q9UPT5-6"/>
    <property type="nucleotide sequence ID" value="NM_001145299.4"/>
</dbReference>
<dbReference type="RefSeq" id="NP_001269242.1">
    <property type="nucleotide sequence ID" value="NM_001282313.1"/>
</dbReference>
<dbReference type="RefSeq" id="NP_056034.2">
    <molecule id="Q9UPT5-2"/>
    <property type="nucleotide sequence ID" value="NM_015219.5"/>
</dbReference>
<dbReference type="SMR" id="Q9UPT5"/>
<dbReference type="BioGRID" id="116867">
    <property type="interactions" value="135"/>
</dbReference>
<dbReference type="ComplexPortal" id="CPX-4943">
    <property type="entry name" value="Exocyst, EXOC6 variant"/>
</dbReference>
<dbReference type="ComplexPortal" id="CPX-4944">
    <property type="entry name" value="Exocyst, EXOC6B variant"/>
</dbReference>
<dbReference type="CORUM" id="Q9UPT5"/>
<dbReference type="DIP" id="DIP-37604N"/>
<dbReference type="FunCoup" id="Q9UPT5">
    <property type="interactions" value="2653"/>
</dbReference>
<dbReference type="IntAct" id="Q9UPT5">
    <property type="interactions" value="100"/>
</dbReference>
<dbReference type="MINT" id="Q9UPT5"/>
<dbReference type="STRING" id="9606.ENSP00000334100"/>
<dbReference type="TCDB" id="1.F.2.1.2">
    <property type="family name" value="the octameric exocyst (exocyst) family"/>
</dbReference>
<dbReference type="GlyGen" id="Q9UPT5">
    <property type="glycosylation" value="2 sites, 1 O-linked glycan (1 site)"/>
</dbReference>
<dbReference type="iPTMnet" id="Q9UPT5"/>
<dbReference type="PhosphoSitePlus" id="Q9UPT5"/>
<dbReference type="BioMuta" id="EXOC7"/>
<dbReference type="DMDM" id="38372889"/>
<dbReference type="jPOST" id="Q9UPT5"/>
<dbReference type="MassIVE" id="Q9UPT5"/>
<dbReference type="PaxDb" id="9606-ENSP00000334100"/>
<dbReference type="PeptideAtlas" id="Q9UPT5"/>
<dbReference type="ProteomicsDB" id="85434">
    <molecule id="Q9UPT5-3"/>
</dbReference>
<dbReference type="ProteomicsDB" id="85435">
    <molecule id="Q9UPT5-1"/>
</dbReference>
<dbReference type="ProteomicsDB" id="85436">
    <molecule id="Q9UPT5-2"/>
</dbReference>
<dbReference type="ProteomicsDB" id="85437">
    <molecule id="Q9UPT5-4"/>
</dbReference>
<dbReference type="ProteomicsDB" id="85438">
    <molecule id="Q9UPT5-5"/>
</dbReference>
<dbReference type="ProteomicsDB" id="85439">
    <molecule id="Q9UPT5-6"/>
</dbReference>
<dbReference type="Pumba" id="Q9UPT5"/>
<dbReference type="Antibodypedia" id="19667">
    <property type="antibodies" value="194 antibodies from 33 providers"/>
</dbReference>
<dbReference type="DNASU" id="23265"/>
<dbReference type="Ensembl" id="ENST00000332065.9">
    <molecule id="Q9UPT5-2"/>
    <property type="protein sequence ID" value="ENSP00000333806.4"/>
    <property type="gene ID" value="ENSG00000182473.22"/>
</dbReference>
<dbReference type="Ensembl" id="ENST00000335146.11">
    <molecule id="Q9UPT5-3"/>
    <property type="protein sequence ID" value="ENSP00000334100.6"/>
    <property type="gene ID" value="ENSG00000182473.22"/>
</dbReference>
<dbReference type="Ensembl" id="ENST00000411744.6">
    <molecule id="Q9UPT5-5"/>
    <property type="protein sequence ID" value="ENSP00000404322.2"/>
    <property type="gene ID" value="ENSG00000182473.22"/>
</dbReference>
<dbReference type="Ensembl" id="ENST00000589210.6">
    <molecule id="Q9UPT5-1"/>
    <property type="protein sequence ID" value="ENSP00000468404.1"/>
    <property type="gene ID" value="ENSG00000182473.22"/>
</dbReference>
<dbReference type="Ensembl" id="ENST00000634349.1">
    <molecule id="Q9UPT5-6"/>
    <property type="protein sequence ID" value="ENSP00000489266.1"/>
    <property type="gene ID" value="ENSG00000182473.22"/>
</dbReference>
<dbReference type="GeneID" id="23265"/>
<dbReference type="KEGG" id="hsa:23265"/>
<dbReference type="MANE-Select" id="ENST00000589210.6">
    <molecule id="Q9UPT5-1"/>
    <property type="protein sequence ID" value="ENSP00000468404.1"/>
    <property type="RefSeq nucleotide sequence ID" value="NM_001013839.4"/>
    <property type="RefSeq protein sequence ID" value="NP_001013861.1"/>
</dbReference>
<dbReference type="UCSC" id="uc002jqq.5">
    <molecule id="Q9UPT5-3"/>
    <property type="organism name" value="human"/>
</dbReference>
<dbReference type="AGR" id="HGNC:23214"/>
<dbReference type="CTD" id="23265"/>
<dbReference type="DisGeNET" id="23265"/>
<dbReference type="GeneCards" id="EXOC7"/>
<dbReference type="HGNC" id="HGNC:23214">
    <property type="gene designation" value="EXOC7"/>
</dbReference>
<dbReference type="HPA" id="ENSG00000182473">
    <property type="expression patterns" value="Low tissue specificity"/>
</dbReference>
<dbReference type="MalaCards" id="EXOC7"/>
<dbReference type="MIM" id="608163">
    <property type="type" value="gene"/>
</dbReference>
<dbReference type="MIM" id="619072">
    <property type="type" value="phenotype"/>
</dbReference>
<dbReference type="neXtProt" id="NX_Q9UPT5"/>
<dbReference type="OpenTargets" id="ENSG00000182473"/>
<dbReference type="PharmGKB" id="PA134988420"/>
<dbReference type="VEuPathDB" id="HostDB:ENSG00000182473"/>
<dbReference type="eggNOG" id="KOG2344">
    <property type="taxonomic scope" value="Eukaryota"/>
</dbReference>
<dbReference type="GeneTree" id="ENSGT00390000003595"/>
<dbReference type="InParanoid" id="Q9UPT5"/>
<dbReference type="OMA" id="GIIRAGP"/>
<dbReference type="OrthoDB" id="1922221at2759"/>
<dbReference type="PAN-GO" id="Q9UPT5">
    <property type="GO annotations" value="2 GO annotations based on evolutionary models"/>
</dbReference>
<dbReference type="PhylomeDB" id="Q9UPT5"/>
<dbReference type="TreeFam" id="TF324243"/>
<dbReference type="PathwayCommons" id="Q9UPT5"/>
<dbReference type="Reactome" id="R-HSA-1445148">
    <property type="pathway name" value="Translocation of SLC2A4 (GLUT4) to the plasma membrane"/>
</dbReference>
<dbReference type="Reactome" id="R-HSA-264876">
    <property type="pathway name" value="Insulin processing"/>
</dbReference>
<dbReference type="Reactome" id="R-HSA-5620916">
    <property type="pathway name" value="VxPx cargo-targeting to cilium"/>
</dbReference>
<dbReference type="SignaLink" id="Q9UPT5"/>
<dbReference type="SIGNOR" id="Q9UPT5"/>
<dbReference type="BioGRID-ORCS" id="23265">
    <property type="hits" value="333 hits in 1168 CRISPR screens"/>
</dbReference>
<dbReference type="CD-CODE" id="FB4E32DD">
    <property type="entry name" value="Presynaptic clusters and postsynaptic densities"/>
</dbReference>
<dbReference type="ChiTaRS" id="EXOC7">
    <property type="organism name" value="human"/>
</dbReference>
<dbReference type="GeneWiki" id="EXOC7"/>
<dbReference type="GenomeRNAi" id="23265"/>
<dbReference type="Pharos" id="Q9UPT5">
    <property type="development level" value="Tbio"/>
</dbReference>
<dbReference type="PRO" id="PR:Q9UPT5"/>
<dbReference type="Proteomes" id="UP000005640">
    <property type="component" value="Chromosome 17"/>
</dbReference>
<dbReference type="RNAct" id="Q9UPT5">
    <property type="molecule type" value="protein"/>
</dbReference>
<dbReference type="Bgee" id="ENSG00000182473">
    <property type="expression patterns" value="Expressed in right uterine tube and 203 other cell types or tissues"/>
</dbReference>
<dbReference type="ExpressionAtlas" id="Q9UPT5">
    <property type="expression patterns" value="baseline and differential"/>
</dbReference>
<dbReference type="GO" id="GO:0034451">
    <property type="term" value="C:centriolar satellite"/>
    <property type="evidence" value="ECO:0000314"/>
    <property type="project" value="BHF-UCL"/>
</dbReference>
<dbReference type="GO" id="GO:0005829">
    <property type="term" value="C:cytosol"/>
    <property type="evidence" value="ECO:0000304"/>
    <property type="project" value="Reactome"/>
</dbReference>
<dbReference type="GO" id="GO:0000145">
    <property type="term" value="C:exocyst"/>
    <property type="evidence" value="ECO:0000318"/>
    <property type="project" value="GO_Central"/>
</dbReference>
<dbReference type="GO" id="GO:0090543">
    <property type="term" value="C:Flemming body"/>
    <property type="evidence" value="ECO:0007669"/>
    <property type="project" value="UniProtKB-SubCell"/>
</dbReference>
<dbReference type="GO" id="GO:0032584">
    <property type="term" value="C:growth cone membrane"/>
    <property type="evidence" value="ECO:0007669"/>
    <property type="project" value="Ensembl"/>
</dbReference>
<dbReference type="GO" id="GO:0016020">
    <property type="term" value="C:membrane"/>
    <property type="evidence" value="ECO:0007005"/>
    <property type="project" value="UniProtKB"/>
</dbReference>
<dbReference type="GO" id="GO:0005815">
    <property type="term" value="C:microtubule organizing center"/>
    <property type="evidence" value="ECO:0000314"/>
    <property type="project" value="BHF-UCL"/>
</dbReference>
<dbReference type="GO" id="GO:0030496">
    <property type="term" value="C:midbody"/>
    <property type="evidence" value="ECO:0000314"/>
    <property type="project" value="UniProt"/>
</dbReference>
<dbReference type="GO" id="GO:0005886">
    <property type="term" value="C:plasma membrane"/>
    <property type="evidence" value="ECO:0000304"/>
    <property type="project" value="Reactome"/>
</dbReference>
<dbReference type="GO" id="GO:0005546">
    <property type="term" value="F:phosphatidylinositol-4,5-bisphosphate binding"/>
    <property type="evidence" value="ECO:0007669"/>
    <property type="project" value="InterPro"/>
</dbReference>
<dbReference type="GO" id="GO:0030674">
    <property type="term" value="F:protein-macromolecule adaptor activity"/>
    <property type="evidence" value="ECO:0000314"/>
    <property type="project" value="UniProt"/>
</dbReference>
<dbReference type="GO" id="GO:0006887">
    <property type="term" value="P:exocytosis"/>
    <property type="evidence" value="ECO:0000318"/>
    <property type="project" value="GO_Central"/>
</dbReference>
<dbReference type="GO" id="GO:0090148">
    <property type="term" value="P:membrane fission"/>
    <property type="evidence" value="ECO:0000303"/>
    <property type="project" value="ComplexPortal"/>
</dbReference>
<dbReference type="GO" id="GO:0000281">
    <property type="term" value="P:mitotic cytokinesis"/>
    <property type="evidence" value="ECO:0000303"/>
    <property type="project" value="ComplexPortal"/>
</dbReference>
<dbReference type="GO" id="GO:1903438">
    <property type="term" value="P:positive regulation of mitotic cytokinetic process"/>
    <property type="evidence" value="ECO:0000314"/>
    <property type="project" value="UniProt"/>
</dbReference>
<dbReference type="GO" id="GO:0071806">
    <property type="term" value="P:protein transmembrane transport"/>
    <property type="evidence" value="ECO:0007669"/>
    <property type="project" value="Ensembl"/>
</dbReference>
<dbReference type="GO" id="GO:2000535">
    <property type="term" value="P:regulation of entry of bacterium into host cell"/>
    <property type="evidence" value="ECO:0000315"/>
    <property type="project" value="AgBase"/>
</dbReference>
<dbReference type="GO" id="GO:0016241">
    <property type="term" value="P:regulation of macroautophagy"/>
    <property type="evidence" value="ECO:0000304"/>
    <property type="project" value="ParkinsonsUK-UCL"/>
</dbReference>
<dbReference type="GO" id="GO:0006904">
    <property type="term" value="P:vesicle docking involved in exocytosis"/>
    <property type="evidence" value="ECO:0000303"/>
    <property type="project" value="UniProt"/>
</dbReference>
<dbReference type="GO" id="GO:0090522">
    <property type="term" value="P:vesicle tethering involved in exocytosis"/>
    <property type="evidence" value="ECO:0000303"/>
    <property type="project" value="ComplexPortal"/>
</dbReference>
<dbReference type="FunFam" id="1.20.1280.170:FF:000001">
    <property type="entry name" value="Exocyst complex component 7"/>
    <property type="match status" value="1"/>
</dbReference>
<dbReference type="FunFam" id="1.20.1280.170:FF:000002">
    <property type="entry name" value="Exocyst complex component 7"/>
    <property type="match status" value="1"/>
</dbReference>
<dbReference type="Gene3D" id="1.20.1280.170">
    <property type="entry name" value="Exocyst complex component Exo70"/>
    <property type="match status" value="2"/>
</dbReference>
<dbReference type="InterPro" id="IPR016159">
    <property type="entry name" value="Cullin_repeat-like_dom_sf"/>
</dbReference>
<dbReference type="InterPro" id="IPR004140">
    <property type="entry name" value="Exo70"/>
</dbReference>
<dbReference type="InterPro" id="IPR046364">
    <property type="entry name" value="Exo70_C"/>
</dbReference>
<dbReference type="PANTHER" id="PTHR12542:SF41">
    <property type="entry name" value="EXOCYST COMPLEX COMPONENT 7"/>
    <property type="match status" value="1"/>
</dbReference>
<dbReference type="PANTHER" id="PTHR12542">
    <property type="entry name" value="EXOCYST COMPLEX PROTEIN EXO70"/>
    <property type="match status" value="1"/>
</dbReference>
<dbReference type="Pfam" id="PF03081">
    <property type="entry name" value="Exo70_C"/>
    <property type="match status" value="1"/>
</dbReference>
<dbReference type="Pfam" id="PF20669">
    <property type="entry name" value="Exo70_N"/>
    <property type="match status" value="1"/>
</dbReference>
<dbReference type="SUPFAM" id="SSF74788">
    <property type="entry name" value="Cullin repeat-like"/>
    <property type="match status" value="1"/>
</dbReference>
<organism>
    <name type="scientific">Homo sapiens</name>
    <name type="common">Human</name>
    <dbReference type="NCBI Taxonomy" id="9606"/>
    <lineage>
        <taxon>Eukaryota</taxon>
        <taxon>Metazoa</taxon>
        <taxon>Chordata</taxon>
        <taxon>Craniata</taxon>
        <taxon>Vertebrata</taxon>
        <taxon>Euteleostomi</taxon>
        <taxon>Mammalia</taxon>
        <taxon>Eutheria</taxon>
        <taxon>Euarchontoglires</taxon>
        <taxon>Primates</taxon>
        <taxon>Haplorrhini</taxon>
        <taxon>Catarrhini</taxon>
        <taxon>Hominidae</taxon>
        <taxon>Homo</taxon>
    </lineage>
</organism>
<keyword id="KW-0025">Alternative splicing</keyword>
<keyword id="KW-1003">Cell membrane</keyword>
<keyword id="KW-0175">Coiled coil</keyword>
<keyword id="KW-0963">Cytoplasm</keyword>
<keyword id="KW-0887">Epilepsy</keyword>
<keyword id="KW-0268">Exocytosis</keyword>
<keyword id="KW-0472">Membrane</keyword>
<keyword id="KW-0597">Phosphoprotein</keyword>
<keyword id="KW-0653">Protein transport</keyword>
<keyword id="KW-1267">Proteomics identification</keyword>
<keyword id="KW-1185">Reference proteome</keyword>
<keyword id="KW-0813">Transport</keyword>
<evidence type="ECO:0000250" key="1"/>
<evidence type="ECO:0000250" key="2">
    <source>
        <dbReference type="UniProtKB" id="E7FC72"/>
    </source>
</evidence>
<evidence type="ECO:0000250" key="3">
    <source>
        <dbReference type="UniProtKB" id="O35250"/>
    </source>
</evidence>
<evidence type="ECO:0000250" key="4">
    <source>
        <dbReference type="UniProtKB" id="O54922"/>
    </source>
</evidence>
<evidence type="ECO:0000255" key="5"/>
<evidence type="ECO:0000256" key="6">
    <source>
        <dbReference type="SAM" id="MobiDB-lite"/>
    </source>
</evidence>
<evidence type="ECO:0000269" key="7">
    <source>
    </source>
</evidence>
<evidence type="ECO:0000269" key="8">
    <source>
    </source>
</evidence>
<evidence type="ECO:0000303" key="9">
    <source>
    </source>
</evidence>
<evidence type="ECO:0000303" key="10">
    <source>
    </source>
</evidence>
<evidence type="ECO:0000303" key="11">
    <source>
    </source>
</evidence>
<evidence type="ECO:0000303" key="12">
    <source>
    </source>
</evidence>
<evidence type="ECO:0000303" key="13">
    <source ref="1"/>
</evidence>
<evidence type="ECO:0000305" key="14"/>
<feature type="chain" id="PRO_0000118960" description="Exocyst complex component 7">
    <location>
        <begin position="1"/>
        <end position="735"/>
    </location>
</feature>
<feature type="region of interest" description="Disordered" evidence="6">
    <location>
        <begin position="239"/>
        <end position="268"/>
    </location>
</feature>
<feature type="coiled-coil region" evidence="5">
    <location>
        <begin position="5"/>
        <end position="42"/>
    </location>
</feature>
<feature type="coiled-coil region" evidence="5">
    <location>
        <begin position="63"/>
        <end position="85"/>
    </location>
</feature>
<feature type="modified residue" description="Phosphoserine" evidence="4">
    <location>
        <position position="133"/>
    </location>
</feature>
<feature type="splice variant" id="VSP_041098" description="In isoform 5." evidence="13">
    <location>
        <begin position="269"/>
        <end position="327"/>
    </location>
</feature>
<feature type="splice variant" id="VSP_001483" description="In isoform 2." evidence="10">
    <location>
        <begin position="271"/>
        <end position="352"/>
    </location>
</feature>
<feature type="splice variant" id="VSP_008876" description="In isoform 4." evidence="10">
    <original>TIRKAQNLLKQYS</original>
    <variation>EPPSWPISATARG</variation>
    <location>
        <begin position="271"/>
        <end position="283"/>
    </location>
</feature>
<feature type="splice variant" id="VSP_008877" description="In isoform 4." evidence="10">
    <location>
        <begin position="284"/>
        <end position="735"/>
    </location>
</feature>
<feature type="splice variant" id="VSP_041099" description="In isoform 6." evidence="13">
    <location>
        <begin position="301"/>
        <end position="328"/>
    </location>
</feature>
<feature type="splice variant" id="VSP_008878" description="In isoform 1." evidence="9 11 12">
    <location>
        <begin position="302"/>
        <end position="352"/>
    </location>
</feature>
<feature type="sequence variant" id="VAR_085057" description="In NEDSEBA; uncertain significance." evidence="8">
    <location>
        <position position="48"/>
    </location>
</feature>
<feature type="sequence variant" id="VAR_085058" description="In NEDSEBA; uncertain significance; dbSNP:rs762553587." evidence="8">
    <original>A</original>
    <variation>T</variation>
    <location>
        <position position="574"/>
    </location>
</feature>
<feature type="sequence conflict" description="In Ref. 3; BAB14694." evidence="14" ref="3">
    <original>L</original>
    <variation>Q</variation>
    <location>
        <position position="234"/>
    </location>
</feature>
<feature type="sequence conflict" description="In Ref. 3; BAB14694." evidence="14" ref="3">
    <original>D</original>
    <variation>N</variation>
    <location>
        <position position="362"/>
    </location>
</feature>
<feature type="sequence conflict" description="In Ref. 6; AAH18466." evidence="14" ref="6">
    <original>N</original>
    <variation>I</variation>
    <location>
        <position position="459"/>
    </location>
</feature>
<feature type="sequence conflict" description="In Ref. 3; BAB14694." evidence="14" ref="3">
    <original>D</original>
    <variation>G</variation>
    <location>
        <position position="646"/>
    </location>
</feature>
<name>EXOC7_HUMAN</name>
<sequence>MIPPQEASARRREIEDKLKQEEETLSFIRDSLEKSDQLTKNMVSILSSFESRLMKLENSIIPVHKQTENLQRLQENVEKTLSCLDHVISYYHVASDTEKIIREGPTGRLEEYLGSMAKIQKAVEYFQDNSPDSPELNKVKLLFERGKEALESEFRSLMTRHSKVVSPVLILDLISGDDDLEAQEDVTLEHLPESVLQDVIRISRWLVEYGRNQDFMNVYYQIRSSQLDRSIKGLKEHFHKSSSSSGVPYSPAIPNKRKDTPTKKPVKRPGTIRKAQNLLKQYSQHGLDGKKGGSNLIPLEGLLPCTPRGGLPGPWINAACVCAADISPGHEHDFRVKHLSEALNDKHGPLAGRDDMLDVETDAYIHCVSAFVKLAQSEYQLLADIIPEHHQKKTFDSLIQDALDGLMLEGENIVSAARKAIVRHDFSTVLTVFPILRHLKQTKPEFDQVLQGTAASTKNKLPGLITSMETIGAKALEDFADNIKNDPDKEYNMPKDGTVHELTSNAILFLQQLLDFQETAGAMLASQETSSSATSYSSEFSKRLLSTYICKVLGNLQLNLLSKSKVYEDPALSAIFLHNNYNYILKSLEKSELIQLVAVTQKTAERSYREHIEQQIQTYQRSWLKVTDYIAEKNLPVFQPGVKLRDKERQIIKERFKGFNDGLEELCKIQKAWAIPDTEQRDRIRQAQKTIVKETYGAFLQKFGSVPFTKNPEKYIKYGVEQVGDMIDRLFDTSA</sequence>
<reference key="1">
    <citation type="submission" date="2008-11" db="EMBL/GenBank/DDBJ databases">
        <title>EXOC7 is alternatively spliced in cellular senescence.</title>
        <authorList>
            <person name="Dellago H."/>
            <person name="Loescher M."/>
            <person name="Ajuh P."/>
            <person name="Voglauer R."/>
            <person name="Fortschegger K."/>
            <person name="Eisenhaber F."/>
            <person name="Lamond A.I."/>
            <person name="Grillari J."/>
        </authorList>
    </citation>
    <scope>NUCLEOTIDE SEQUENCE [MRNA] (ISOFORMS 5 AND 6)</scope>
</reference>
<reference key="2">
    <citation type="journal article" date="1999" name="DNA Res.">
        <title>Prediction of the coding sequences of unidentified human genes. XIV. The complete sequences of 100 new cDNA clones from brain which code for large proteins in vitro.</title>
        <authorList>
            <person name="Kikuno R."/>
            <person name="Nagase T."/>
            <person name="Ishikawa K."/>
            <person name="Hirosawa M."/>
            <person name="Miyajima N."/>
            <person name="Tanaka A."/>
            <person name="Kotani H."/>
            <person name="Nomura N."/>
            <person name="Ohara O."/>
        </authorList>
    </citation>
    <scope>NUCLEOTIDE SEQUENCE [LARGE SCALE MRNA] (ISOFORM 1)</scope>
    <source>
        <tissue>Brain</tissue>
    </source>
</reference>
<reference key="3">
    <citation type="journal article" date="2004" name="Nat. Genet.">
        <title>Complete sequencing and characterization of 21,243 full-length human cDNAs.</title>
        <authorList>
            <person name="Ota T."/>
            <person name="Suzuki Y."/>
            <person name="Nishikawa T."/>
            <person name="Otsuki T."/>
            <person name="Sugiyama T."/>
            <person name="Irie R."/>
            <person name="Wakamatsu A."/>
            <person name="Hayashi K."/>
            <person name="Sato H."/>
            <person name="Nagai K."/>
            <person name="Kimura K."/>
            <person name="Makita H."/>
            <person name="Sekine M."/>
            <person name="Obayashi M."/>
            <person name="Nishi T."/>
            <person name="Shibahara T."/>
            <person name="Tanaka T."/>
            <person name="Ishii S."/>
            <person name="Yamamoto J."/>
            <person name="Saito K."/>
            <person name="Kawai Y."/>
            <person name="Isono Y."/>
            <person name="Nakamura Y."/>
            <person name="Nagahari K."/>
            <person name="Murakami K."/>
            <person name="Yasuda T."/>
            <person name="Iwayanagi T."/>
            <person name="Wagatsuma M."/>
            <person name="Shiratori A."/>
            <person name="Sudo H."/>
            <person name="Hosoiri T."/>
            <person name="Kaku Y."/>
            <person name="Kodaira H."/>
            <person name="Kondo H."/>
            <person name="Sugawara M."/>
            <person name="Takahashi M."/>
            <person name="Kanda K."/>
            <person name="Yokoi T."/>
            <person name="Furuya T."/>
            <person name="Kikkawa E."/>
            <person name="Omura Y."/>
            <person name="Abe K."/>
            <person name="Kamihara K."/>
            <person name="Katsuta N."/>
            <person name="Sato K."/>
            <person name="Tanikawa M."/>
            <person name="Yamazaki M."/>
            <person name="Ninomiya K."/>
            <person name="Ishibashi T."/>
            <person name="Yamashita H."/>
            <person name="Murakawa K."/>
            <person name="Fujimori K."/>
            <person name="Tanai H."/>
            <person name="Kimata M."/>
            <person name="Watanabe M."/>
            <person name="Hiraoka S."/>
            <person name="Chiba Y."/>
            <person name="Ishida S."/>
            <person name="Ono Y."/>
            <person name="Takiguchi S."/>
            <person name="Watanabe S."/>
            <person name="Yosida M."/>
            <person name="Hotuta T."/>
            <person name="Kusano J."/>
            <person name="Kanehori K."/>
            <person name="Takahashi-Fujii A."/>
            <person name="Hara H."/>
            <person name="Tanase T.-O."/>
            <person name="Nomura Y."/>
            <person name="Togiya S."/>
            <person name="Komai F."/>
            <person name="Hara R."/>
            <person name="Takeuchi K."/>
            <person name="Arita M."/>
            <person name="Imose N."/>
            <person name="Musashino K."/>
            <person name="Yuuki H."/>
            <person name="Oshima A."/>
            <person name="Sasaki N."/>
            <person name="Aotsuka S."/>
            <person name="Yoshikawa Y."/>
            <person name="Matsunawa H."/>
            <person name="Ichihara T."/>
            <person name="Shiohata N."/>
            <person name="Sano S."/>
            <person name="Moriya S."/>
            <person name="Momiyama H."/>
            <person name="Satoh N."/>
            <person name="Takami S."/>
            <person name="Terashima Y."/>
            <person name="Suzuki O."/>
            <person name="Nakagawa S."/>
            <person name="Senoh A."/>
            <person name="Mizoguchi H."/>
            <person name="Goto Y."/>
            <person name="Shimizu F."/>
            <person name="Wakebe H."/>
            <person name="Hishigaki H."/>
            <person name="Watanabe T."/>
            <person name="Sugiyama A."/>
            <person name="Takemoto M."/>
            <person name="Kawakami B."/>
            <person name="Yamazaki M."/>
            <person name="Watanabe K."/>
            <person name="Kumagai A."/>
            <person name="Itakura S."/>
            <person name="Fukuzumi Y."/>
            <person name="Fujimori Y."/>
            <person name="Komiyama M."/>
            <person name="Tashiro H."/>
            <person name="Tanigami A."/>
            <person name="Fujiwara T."/>
            <person name="Ono T."/>
            <person name="Yamada K."/>
            <person name="Fujii Y."/>
            <person name="Ozaki K."/>
            <person name="Hirao M."/>
            <person name="Ohmori Y."/>
            <person name="Kawabata A."/>
            <person name="Hikiji T."/>
            <person name="Kobatake N."/>
            <person name="Inagaki H."/>
            <person name="Ikema Y."/>
            <person name="Okamoto S."/>
            <person name="Okitani R."/>
            <person name="Kawakami T."/>
            <person name="Noguchi S."/>
            <person name="Itoh T."/>
            <person name="Shigeta K."/>
            <person name="Senba T."/>
            <person name="Matsumura K."/>
            <person name="Nakajima Y."/>
            <person name="Mizuno T."/>
            <person name="Morinaga M."/>
            <person name="Sasaki M."/>
            <person name="Togashi T."/>
            <person name="Oyama M."/>
            <person name="Hata H."/>
            <person name="Watanabe M."/>
            <person name="Komatsu T."/>
            <person name="Mizushima-Sugano J."/>
            <person name="Satoh T."/>
            <person name="Shirai Y."/>
            <person name="Takahashi Y."/>
            <person name="Nakagawa K."/>
            <person name="Okumura K."/>
            <person name="Nagase T."/>
            <person name="Nomura N."/>
            <person name="Kikuchi H."/>
            <person name="Masuho Y."/>
            <person name="Yamashita R."/>
            <person name="Nakai K."/>
            <person name="Yada T."/>
            <person name="Nakamura Y."/>
            <person name="Ohara O."/>
            <person name="Isogai T."/>
            <person name="Sugano S."/>
        </authorList>
    </citation>
    <scope>NUCLEOTIDE SEQUENCE [LARGE SCALE MRNA] (ISOFORMS 2 AND 4)</scope>
    <source>
        <tissue>Mammary gland</tissue>
        <tissue>Placenta</tissue>
        <tissue>Teratocarcinoma</tissue>
    </source>
</reference>
<reference key="4">
    <citation type="journal article" date="2007" name="BMC Genomics">
        <title>The full-ORF clone resource of the German cDNA consortium.</title>
        <authorList>
            <person name="Bechtel S."/>
            <person name="Rosenfelder H."/>
            <person name="Duda A."/>
            <person name="Schmidt C.P."/>
            <person name="Ernst U."/>
            <person name="Wellenreuther R."/>
            <person name="Mehrle A."/>
            <person name="Schuster C."/>
            <person name="Bahr A."/>
            <person name="Bloecker H."/>
            <person name="Heubner D."/>
            <person name="Hoerlein A."/>
            <person name="Michel G."/>
            <person name="Wedler H."/>
            <person name="Koehrer K."/>
            <person name="Ottenwaelder B."/>
            <person name="Poustka A."/>
            <person name="Wiemann S."/>
            <person name="Schupp I."/>
        </authorList>
    </citation>
    <scope>NUCLEOTIDE SEQUENCE [LARGE SCALE MRNA] (ISOFORM 1)</scope>
    <source>
        <tissue>Brain</tissue>
    </source>
</reference>
<reference key="5">
    <citation type="journal article" date="2006" name="Nature">
        <title>DNA sequence of human chromosome 17 and analysis of rearrangement in the human lineage.</title>
        <authorList>
            <person name="Zody M.C."/>
            <person name="Garber M."/>
            <person name="Adams D.J."/>
            <person name="Sharpe T."/>
            <person name="Harrow J."/>
            <person name="Lupski J.R."/>
            <person name="Nicholson C."/>
            <person name="Searle S.M."/>
            <person name="Wilming L."/>
            <person name="Young S.K."/>
            <person name="Abouelleil A."/>
            <person name="Allen N.R."/>
            <person name="Bi W."/>
            <person name="Bloom T."/>
            <person name="Borowsky M.L."/>
            <person name="Bugalter B.E."/>
            <person name="Butler J."/>
            <person name="Chang J.L."/>
            <person name="Chen C.-K."/>
            <person name="Cook A."/>
            <person name="Corum B."/>
            <person name="Cuomo C.A."/>
            <person name="de Jong P.J."/>
            <person name="DeCaprio D."/>
            <person name="Dewar K."/>
            <person name="FitzGerald M."/>
            <person name="Gilbert J."/>
            <person name="Gibson R."/>
            <person name="Gnerre S."/>
            <person name="Goldstein S."/>
            <person name="Grafham D.V."/>
            <person name="Grocock R."/>
            <person name="Hafez N."/>
            <person name="Hagopian D.S."/>
            <person name="Hart E."/>
            <person name="Norman C.H."/>
            <person name="Humphray S."/>
            <person name="Jaffe D.B."/>
            <person name="Jones M."/>
            <person name="Kamal M."/>
            <person name="Khodiyar V.K."/>
            <person name="LaButti K."/>
            <person name="Laird G."/>
            <person name="Lehoczky J."/>
            <person name="Liu X."/>
            <person name="Lokyitsang T."/>
            <person name="Loveland J."/>
            <person name="Lui A."/>
            <person name="Macdonald P."/>
            <person name="Major J.E."/>
            <person name="Matthews L."/>
            <person name="Mauceli E."/>
            <person name="McCarroll S.A."/>
            <person name="Mihalev A.H."/>
            <person name="Mudge J."/>
            <person name="Nguyen C."/>
            <person name="Nicol R."/>
            <person name="O'Leary S.B."/>
            <person name="Osoegawa K."/>
            <person name="Schwartz D.C."/>
            <person name="Shaw-Smith C."/>
            <person name="Stankiewicz P."/>
            <person name="Steward C."/>
            <person name="Swarbreck D."/>
            <person name="Venkataraman V."/>
            <person name="Whittaker C.A."/>
            <person name="Yang X."/>
            <person name="Zimmer A.R."/>
            <person name="Bradley A."/>
            <person name="Hubbard T."/>
            <person name="Birren B.W."/>
            <person name="Rogers J."/>
            <person name="Lander E.S."/>
            <person name="Nusbaum C."/>
        </authorList>
    </citation>
    <scope>NUCLEOTIDE SEQUENCE [LARGE SCALE GENOMIC DNA]</scope>
</reference>
<reference key="6">
    <citation type="journal article" date="2004" name="Genome Res.">
        <title>The status, quality, and expansion of the NIH full-length cDNA project: the Mammalian Gene Collection (MGC).</title>
        <authorList>
            <consortium name="The MGC Project Team"/>
        </authorList>
    </citation>
    <scope>NUCLEOTIDE SEQUENCE [LARGE SCALE MRNA] (ISOFORMS 1 AND 3)</scope>
    <source>
        <tissue>Brain</tissue>
        <tissue>Eye</tissue>
    </source>
</reference>
<reference key="7">
    <citation type="journal article" date="2005" name="Cell">
        <title>Centriolin anchoring of exocyst and SNARE complexes at the midbody is required for secretory-vesicle-mediated abscission.</title>
        <authorList>
            <person name="Gromley A."/>
            <person name="Yeaman C."/>
            <person name="Rosa J."/>
            <person name="Redick S."/>
            <person name="Chen C.-T."/>
            <person name="Mirabelle S."/>
            <person name="Guha M."/>
            <person name="Sillibourne J."/>
            <person name="Doxsey S.J."/>
        </authorList>
    </citation>
    <scope>SUBCELLULAR LOCATION</scope>
</reference>
<reference key="8">
    <citation type="journal article" date="2005" name="EMBO J.">
        <title>Rab11-FIP3 and FIP4 interact with Arf6 and the exocyst to control membrane traffic in cytokinesis.</title>
        <authorList>
            <person name="Fielding A.B."/>
            <person name="Schonteich E."/>
            <person name="Matheson J."/>
            <person name="Wilson G."/>
            <person name="Yu X."/>
            <person name="Hickson G.R."/>
            <person name="Srivastava S."/>
            <person name="Baldwin S.A."/>
            <person name="Prekeris R."/>
            <person name="Gould G.W."/>
        </authorList>
    </citation>
    <scope>INTERACTION WITH RAB11FIP3</scope>
</reference>
<reference key="9">
    <citation type="journal article" date="2009" name="Anal. Chem.">
        <title>Lys-N and trypsin cover complementary parts of the phosphoproteome in a refined SCX-based approach.</title>
        <authorList>
            <person name="Gauci S."/>
            <person name="Helbig A.O."/>
            <person name="Slijper M."/>
            <person name="Krijgsveld J."/>
            <person name="Heck A.J."/>
            <person name="Mohammed S."/>
        </authorList>
    </citation>
    <scope>IDENTIFICATION BY MASS SPECTROMETRY [LARGE SCALE ANALYSIS]</scope>
</reference>
<reference key="10">
    <citation type="journal article" date="2011" name="BMC Syst. Biol.">
        <title>Initial characterization of the human central proteome.</title>
        <authorList>
            <person name="Burkard T.R."/>
            <person name="Planyavsky M."/>
            <person name="Kaupe I."/>
            <person name="Breitwieser F.P."/>
            <person name="Buerckstuemmer T."/>
            <person name="Bennett K.L."/>
            <person name="Superti-Furga G."/>
            <person name="Colinge J."/>
        </authorList>
    </citation>
    <scope>IDENTIFICATION BY MASS SPECTROMETRY [LARGE SCALE ANALYSIS]</scope>
</reference>
<reference key="11">
    <citation type="journal article" date="2013" name="J. Proteome Res.">
        <title>Toward a comprehensive characterization of a human cancer cell phosphoproteome.</title>
        <authorList>
            <person name="Zhou H."/>
            <person name="Di Palma S."/>
            <person name="Preisinger C."/>
            <person name="Peng M."/>
            <person name="Polat A.N."/>
            <person name="Heck A.J."/>
            <person name="Mohammed S."/>
        </authorList>
    </citation>
    <scope>IDENTIFICATION BY MASS SPECTROMETRY [LARGE SCALE ANALYSIS]</scope>
    <source>
        <tissue>Cervix carcinoma</tissue>
    </source>
</reference>
<reference key="12">
    <citation type="journal article" date="2020" name="Genet. Med.">
        <title>Regulation of human cerebral cortical development by EXOC7 and EXOC8, components of the exocyst complex, and roles in neural progenitor cell proliferation and survival.</title>
        <authorList>
            <person name="Coulter M.E."/>
            <person name="Musaev D."/>
            <person name="DeGennaro E.M."/>
            <person name="Zhang X."/>
            <person name="Henke K."/>
            <person name="James K.N."/>
            <person name="Smith R.S."/>
            <person name="Hill R.S."/>
            <person name="Partlow J.N."/>
            <person name="Al-Saffar M."/>
            <person name="Kamumbu A.S."/>
            <person name="Hatem N."/>
            <person name="Barkovich A.J."/>
            <person name="Aziza J."/>
            <person name="Chassaing N."/>
            <person name="Zaki M.S."/>
            <person name="Sultan T."/>
            <person name="Burglen L."/>
            <person name="Rajab A."/>
            <person name="Al-Gazali L."/>
            <person name="Mochida G.H."/>
            <person name="Harris M.P."/>
            <person name="Gleeson J.G."/>
            <person name="Walsh C.A."/>
        </authorList>
    </citation>
    <scope>TISSUE SPECIFICITY</scope>
    <scope>INVOLVEMENT IN NEDSEBA</scope>
    <scope>VARIANTS NEDSEBA SER-48 DEL AND THR-574</scope>
</reference>
<gene>
    <name type="primary">EXOC7</name>
    <name type="synonym">EXO70</name>
    <name type="synonym">KIAA1067</name>
</gene>
<comment type="function">
    <text evidence="1 2">Component of the exocyst complex involved in the docking of exocytic vesicles with fusion sites on the plasma membrane. In adipocytes, plays a crucial role in targeting SLC2A4 vesicle to the plasma membrane in response to insulin, perhaps directing the vesicle to the precise site of fusion (By similarity). It is required for neuron survival and plays an essential role in cortical development (By similarity).</text>
</comment>
<comment type="subunit">
    <text evidence="1">The exocyst complex is composed of EXOC1, EXOC2, EXOC3, EXOC4, EXOC5, EXOC6, EXOC7 and EXOC8. Interacts with ARHQ in a GTP-dependent manner. Interacts with RAB11FIP3 (By similarity).</text>
</comment>
<comment type="interaction">
    <interactant intactId="EBI-720048">
        <id>Q9UPT5</id>
    </interactant>
    <interactant intactId="EBI-740220">
        <id>O14964</id>
        <label>HGS</label>
    </interactant>
    <organismsDiffer>false</organismsDiffer>
    <experiments>4</experiments>
</comment>
<comment type="interaction">
    <interactant intactId="EBI-720048">
        <id>Q9UPT5</id>
    </interactant>
    <interactant intactId="EBI-744203">
        <id>Q8IY31</id>
        <label>IFT20</label>
    </interactant>
    <organismsDiffer>false</organismsDiffer>
    <experiments>5</experiments>
</comment>
<comment type="interaction">
    <interactant intactId="EBI-720048">
        <id>Q9UPT5</id>
    </interactant>
    <interactant intactId="EBI-739657">
        <id>Q9BQD3</id>
        <label>KXD1</label>
    </interactant>
    <organismsDiffer>false</organismsDiffer>
    <experiments>3</experiments>
</comment>
<comment type="interaction">
    <interactant intactId="EBI-720048">
        <id>Q9UPT5</id>
    </interactant>
    <interactant intactId="EBI-455078">
        <id>Q969G3</id>
        <label>SMARCE1</label>
    </interactant>
    <organismsDiffer>false</organismsDiffer>
    <experiments>5</experiments>
</comment>
<comment type="interaction">
    <interactant intactId="EBI-720048">
        <id>Q9UPT5</id>
    </interactant>
    <interactant intactId="EBI-10172867">
        <id>A1L4H1</id>
        <label>SSC5D</label>
    </interactant>
    <organismsDiffer>false</organismsDiffer>
    <experiments>3</experiments>
</comment>
<comment type="interaction">
    <interactant intactId="EBI-720048">
        <id>Q9UPT5</id>
    </interactant>
    <interactant intactId="EBI-710918">
        <id>Q9WMX2</id>
    </interactant>
    <organismsDiffer>true</organismsDiffer>
    <experiments>3</experiments>
</comment>
<comment type="interaction">
    <interactant intactId="EBI-6251402">
        <id>Q9UPT5-1</id>
    </interactant>
    <interactant intactId="EBI-2837511">
        <id>Q9Y6D5</id>
        <label>ARFGEF2</label>
    </interactant>
    <organismsDiffer>false</organismsDiffer>
    <experiments>4</experiments>
</comment>
<comment type="interaction">
    <interactant intactId="EBI-6251402">
        <id>Q9UPT5-1</id>
    </interactant>
    <interactant intactId="EBI-10175300">
        <id>Q8TD31-3</id>
        <label>CCHCR1</label>
    </interactant>
    <organismsDiffer>false</organismsDiffer>
    <experiments>3</experiments>
</comment>
<comment type="interaction">
    <interactant intactId="EBI-6251402">
        <id>Q9UPT5-1</id>
    </interactant>
    <interactant intactId="EBI-6873363">
        <id>Q8WUE5</id>
        <label>CT55</label>
    </interactant>
    <organismsDiffer>false</organismsDiffer>
    <experiments>3</experiments>
</comment>
<comment type="interaction">
    <interactant intactId="EBI-6251402">
        <id>Q9UPT5-1</id>
    </interactant>
    <interactant intactId="EBI-740282">
        <id>Q9NVF7</id>
        <label>FBXO28</label>
    </interactant>
    <organismsDiffer>false</organismsDiffer>
    <experiments>3</experiments>
</comment>
<comment type="interaction">
    <interactant intactId="EBI-6251402">
        <id>Q9UPT5-1</id>
    </interactant>
    <interactant intactId="EBI-710124">
        <id>O60341</id>
        <label>KDM1A</label>
    </interactant>
    <organismsDiffer>false</organismsDiffer>
    <experiments>3</experiments>
</comment>
<comment type="interaction">
    <interactant intactId="EBI-6251402">
        <id>Q9UPT5-1</id>
    </interactant>
    <interactant intactId="EBI-14069005">
        <id>Q9BVG8-5</id>
        <label>KIFC3</label>
    </interactant>
    <organismsDiffer>false</organismsDiffer>
    <experiments>3</experiments>
</comment>
<comment type="interaction">
    <interactant intactId="EBI-6251402">
        <id>Q9UPT5-1</id>
    </interactant>
    <interactant intactId="EBI-739657">
        <id>Q9BQD3</id>
        <label>KXD1</label>
    </interactant>
    <organismsDiffer>false</organismsDiffer>
    <experiments>3</experiments>
</comment>
<comment type="interaction">
    <interactant intactId="EBI-6251402">
        <id>Q9UPT5-1</id>
    </interactant>
    <interactant intactId="EBI-11991020">
        <id>A6NI15</id>
        <label>MSGN1</label>
    </interactant>
    <organismsDiffer>false</organismsDiffer>
    <experiments>3</experiments>
</comment>
<comment type="interaction">
    <interactant intactId="EBI-6251402">
        <id>Q9UPT5-1</id>
    </interactant>
    <interactant intactId="EBI-742388">
        <id>Q9H8W4</id>
        <label>PLEKHF2</label>
    </interactant>
    <organismsDiffer>false</organismsDiffer>
    <experiments>3</experiments>
</comment>
<comment type="interaction">
    <interactant intactId="EBI-6251402">
        <id>Q9UPT5-1</id>
    </interactant>
    <interactant intactId="EBI-9512693">
        <id>Q53GL6</id>
        <label>RALY</label>
    </interactant>
    <organismsDiffer>false</organismsDiffer>
    <experiments>3</experiments>
</comment>
<comment type="interaction">
    <interactant intactId="EBI-6251402">
        <id>Q9UPT5-1</id>
    </interactant>
    <interactant intactId="EBI-2561646">
        <id>Q86UD0</id>
        <label>SAPCD2</label>
    </interactant>
    <organismsDiffer>false</organismsDiffer>
    <experiments>3</experiments>
</comment>
<comment type="interaction">
    <interactant intactId="EBI-6251402">
        <id>Q9UPT5-1</id>
    </interactant>
    <interactant intactId="EBI-296723">
        <id>O95295</id>
        <label>SNAPIN</label>
    </interactant>
    <organismsDiffer>false</organismsDiffer>
    <experiments>3</experiments>
</comment>
<comment type="interaction">
    <interactant intactId="EBI-6251402">
        <id>Q9UPT5-1</id>
    </interactant>
    <interactant intactId="EBI-10172867">
        <id>A1L4H1</id>
        <label>SSC5D</label>
    </interactant>
    <organismsDiffer>false</organismsDiffer>
    <experiments>3</experiments>
</comment>
<comment type="interaction">
    <interactant intactId="EBI-6251402">
        <id>Q9UPT5-1</id>
    </interactant>
    <interactant intactId="EBI-2130429">
        <id>Q9BYV2</id>
        <label>TRIM54</label>
    </interactant>
    <organismsDiffer>false</organismsDiffer>
    <experiments>3</experiments>
</comment>
<comment type="interaction">
    <interactant intactId="EBI-6251402">
        <id>Q9UPT5-1</id>
    </interactant>
    <interactant intactId="EBI-739895">
        <id>Q8N6Y0</id>
        <label>USHBP1</label>
    </interactant>
    <organismsDiffer>false</organismsDiffer>
    <experiments>3</experiments>
</comment>
<comment type="interaction">
    <interactant intactId="EBI-6251402">
        <id>Q9UPT5-1</id>
    </interactant>
    <interactant intactId="EBI-712905">
        <id>Q9NRH1</id>
        <label>YAE1</label>
    </interactant>
    <organismsDiffer>false</organismsDiffer>
    <experiments>3</experiments>
</comment>
<comment type="subcellular location">
    <subcellularLocation>
        <location evidence="3">Cytoplasm</location>
        <location evidence="3">Cytosol</location>
    </subcellularLocation>
    <subcellularLocation>
        <location evidence="3">Cell membrane</location>
        <topology evidence="14">Peripheral membrane protein</topology>
    </subcellularLocation>
    <subcellularLocation>
        <location evidence="7">Midbody</location>
        <location evidence="7">Midbody ring</location>
    </subcellularLocation>
    <text evidence="3 7">Translocates, as a preformed complex with EXOC3/SEC6 and EXOC4/SEC8, to the plasma membrane in response to insulin through the activation of ARHQ (By similarity). Colocalizes with CNTRL/centriolin at the midbody ring (PubMed:16213214).</text>
</comment>
<comment type="alternative products">
    <event type="alternative splicing"/>
    <isoform>
        <id>Q9UPT5-3</id>
        <name>3</name>
        <sequence type="displayed"/>
    </isoform>
    <isoform>
        <id>Q9UPT5-1</id>
        <name>1</name>
        <sequence type="described" ref="VSP_008878"/>
    </isoform>
    <isoform>
        <id>Q9UPT5-2</id>
        <name>2</name>
        <sequence type="described" ref="VSP_001483"/>
    </isoform>
    <isoform>
        <id>Q9UPT5-4</id>
        <name>4</name>
        <sequence type="described" ref="VSP_008876 VSP_008877"/>
    </isoform>
    <isoform>
        <id>Q9UPT5-5</id>
        <name>5</name>
        <sequence type="described" ref="VSP_041098"/>
    </isoform>
    <isoform>
        <id>Q9UPT5-6</id>
        <name>6</name>
        <sequence type="described" ref="VSP_041099"/>
    </isoform>
</comment>
<comment type="tissue specificity">
    <text evidence="8">Abundant in the ventricular zone, the outer subventricular zone and the cortical plate of the fetal cortex.</text>
</comment>
<comment type="domain">
    <text evidence="1">The N-terminus is involved in SEC8 and ARHQ binding.</text>
</comment>
<comment type="domain">
    <text evidence="1">The C-terminus is required for translocation to the plasma membrane.</text>
</comment>
<comment type="disease" evidence="8">
    <disease id="DI-05952">
        <name>Neurodevelopmental disorder with seizures and brain atrophy</name>
        <acronym>NEDSEBA</acronym>
        <description>An autosomal recessive disorder characterized by brain atrophy, seizures, and developmental delay. Disease severity is variable. Severely affected individuals develop symptoms in utero, which may lead to spontaneous abortion. Patients at the mildest end of the phenotypic spectrum have onset of seizures later in childhood and show developmental delay with mildly impaired intellectual development and minimal brain atrophy.</description>
        <dbReference type="MIM" id="619072"/>
    </disease>
    <text>The disease is caused by variants affecting the gene represented in this entry.</text>
</comment>
<comment type="miscellaneous">
    <molecule>Isoform 4</molecule>
    <text evidence="14">May be due to intron retention.</text>
</comment>
<comment type="similarity">
    <text evidence="14">Belongs to the EXO70 family.</text>
</comment>
<comment type="sequence caution" evidence="14">
    <conflict type="erroneous initiation">
        <sequence resource="EMBL-CDS" id="BAA83019"/>
    </conflict>
    <text>Extended N-terminus.</text>
</comment>
<comment type="sequence caution" evidence="14">
    <conflict type="erroneous initiation">
        <sequence resource="EMBL-CDS" id="BAB14095"/>
    </conflict>
    <text>Truncated N-terminus.</text>
</comment>
<accession>Q9UPT5</accession>
<accession>B5MC69</accession>
<accession>B8XXP2</accession>
<accession>Q8ND93</accession>
<accession>Q8WV91</accession>
<accession>Q96FF0</accession>
<accession>Q9H8C3</accession>
<accession>Q9H9X3</accession>
<accession>Q9HA32</accession>
<proteinExistence type="evidence at protein level"/>